<feature type="initiator methionine" description="Removed">
    <location>
        <position position="1"/>
    </location>
</feature>
<feature type="chain" id="PRO_0000125212" description="Large ribosomal subunit protein uL22">
    <location>
        <begin position="2"/>
        <end position="127"/>
    </location>
</feature>
<name>RL22_RHOPA</name>
<evidence type="ECO:0000255" key="1">
    <source>
        <dbReference type="HAMAP-Rule" id="MF_01331"/>
    </source>
</evidence>
<evidence type="ECO:0000269" key="2">
    <source>
    </source>
</evidence>
<evidence type="ECO:0000305" key="3"/>
<keyword id="KW-0687">Ribonucleoprotein</keyword>
<keyword id="KW-0689">Ribosomal protein</keyword>
<keyword id="KW-0694">RNA-binding</keyword>
<keyword id="KW-0699">rRNA-binding</keyword>
<accession>Q6N4T9</accession>
<sequence>MSKPKRERSLPDNEAKAVARMLRVSPQKLNLVAQLIRGRKASAALADLAFSRKRIAVDVKKCLESAIANAENNHDLDVDALVVSEAHVGKGIVMKRFTPRGRGRSGRIFKPFAQLTIVVRQVEEASA</sequence>
<proteinExistence type="evidence at protein level"/>
<gene>
    <name evidence="1" type="primary">rplV</name>
    <name type="ordered locus">RPA3245</name>
</gene>
<reference key="1">
    <citation type="journal article" date="2004" name="Nat. Biotechnol.">
        <title>Complete genome sequence of the metabolically versatile photosynthetic bacterium Rhodopseudomonas palustris.</title>
        <authorList>
            <person name="Larimer F.W."/>
            <person name="Chain P."/>
            <person name="Hauser L."/>
            <person name="Lamerdin J.E."/>
            <person name="Malfatti S."/>
            <person name="Do L."/>
            <person name="Land M.L."/>
            <person name="Pelletier D.A."/>
            <person name="Beatty J.T."/>
            <person name="Lang A.S."/>
            <person name="Tabita F.R."/>
            <person name="Gibson J.L."/>
            <person name="Hanson T.E."/>
            <person name="Bobst C."/>
            <person name="Torres y Torres J.L."/>
            <person name="Peres C."/>
            <person name="Harrison F.H."/>
            <person name="Gibson J."/>
            <person name="Harwood C.S."/>
        </authorList>
    </citation>
    <scope>NUCLEOTIDE SEQUENCE [LARGE SCALE GENOMIC DNA]</scope>
    <source>
        <strain>ATCC BAA-98 / CGA009</strain>
    </source>
</reference>
<reference key="2">
    <citation type="journal article" date="2004" name="J. Proteome Res.">
        <title>Characterization of the 70S ribosome from Rhodopseudomonas palustris using an integrated 'top-down' and 'bottom-up' mass spectrometric approach.</title>
        <authorList>
            <person name="Strader M.B."/>
            <person name="VerBerkmoes N.C."/>
            <person name="Tabb D.L."/>
            <person name="Connelly H.M."/>
            <person name="Barton J.W."/>
            <person name="Bruce B.D."/>
            <person name="Pelletier D.A."/>
            <person name="Davison B.H."/>
            <person name="Hettich R.L."/>
            <person name="Larimer F.W."/>
            <person name="Hurst G.B."/>
        </authorList>
    </citation>
    <scope>MASS SPECTROMETRY</scope>
    <source>
        <strain>ATCC BAA-98 / CGA009</strain>
    </source>
</reference>
<protein>
    <recommendedName>
        <fullName evidence="1">Large ribosomal subunit protein uL22</fullName>
    </recommendedName>
    <alternativeName>
        <fullName evidence="3">50S ribosomal protein L22</fullName>
    </alternativeName>
    <alternativeName>
        <fullName>RRP-L22</fullName>
    </alternativeName>
</protein>
<dbReference type="EMBL" id="BX572603">
    <property type="protein sequence ID" value="CAE28686.1"/>
    <property type="molecule type" value="Genomic_DNA"/>
</dbReference>
<dbReference type="RefSeq" id="WP_011158790.1">
    <property type="nucleotide sequence ID" value="NZ_CP116810.1"/>
</dbReference>
<dbReference type="SMR" id="Q6N4T9"/>
<dbReference type="IntAct" id="Q6N4T9">
    <property type="interactions" value="1"/>
</dbReference>
<dbReference type="STRING" id="258594.RPA3245"/>
<dbReference type="GeneID" id="66894331"/>
<dbReference type="eggNOG" id="COG0091">
    <property type="taxonomic scope" value="Bacteria"/>
</dbReference>
<dbReference type="HOGENOM" id="CLU_083987_3_0_5"/>
<dbReference type="PhylomeDB" id="Q6N4T9"/>
<dbReference type="GO" id="GO:0022625">
    <property type="term" value="C:cytosolic large ribosomal subunit"/>
    <property type="evidence" value="ECO:0007669"/>
    <property type="project" value="TreeGrafter"/>
</dbReference>
<dbReference type="GO" id="GO:0019843">
    <property type="term" value="F:rRNA binding"/>
    <property type="evidence" value="ECO:0007669"/>
    <property type="project" value="UniProtKB-UniRule"/>
</dbReference>
<dbReference type="GO" id="GO:0003735">
    <property type="term" value="F:structural constituent of ribosome"/>
    <property type="evidence" value="ECO:0007669"/>
    <property type="project" value="InterPro"/>
</dbReference>
<dbReference type="GO" id="GO:0006412">
    <property type="term" value="P:translation"/>
    <property type="evidence" value="ECO:0007669"/>
    <property type="project" value="UniProtKB-UniRule"/>
</dbReference>
<dbReference type="CDD" id="cd00336">
    <property type="entry name" value="Ribosomal_L22"/>
    <property type="match status" value="1"/>
</dbReference>
<dbReference type="Gene3D" id="3.90.470.10">
    <property type="entry name" value="Ribosomal protein L22/L17"/>
    <property type="match status" value="1"/>
</dbReference>
<dbReference type="HAMAP" id="MF_01331_B">
    <property type="entry name" value="Ribosomal_uL22_B"/>
    <property type="match status" value="1"/>
</dbReference>
<dbReference type="InterPro" id="IPR001063">
    <property type="entry name" value="Ribosomal_uL22"/>
</dbReference>
<dbReference type="InterPro" id="IPR005727">
    <property type="entry name" value="Ribosomal_uL22_bac/chlpt-type"/>
</dbReference>
<dbReference type="InterPro" id="IPR047867">
    <property type="entry name" value="Ribosomal_uL22_bac/org-type"/>
</dbReference>
<dbReference type="InterPro" id="IPR036394">
    <property type="entry name" value="Ribosomal_uL22_sf"/>
</dbReference>
<dbReference type="NCBIfam" id="TIGR01044">
    <property type="entry name" value="rplV_bact"/>
    <property type="match status" value="1"/>
</dbReference>
<dbReference type="PANTHER" id="PTHR13501">
    <property type="entry name" value="CHLOROPLAST 50S RIBOSOMAL PROTEIN L22-RELATED"/>
    <property type="match status" value="1"/>
</dbReference>
<dbReference type="PANTHER" id="PTHR13501:SF8">
    <property type="entry name" value="LARGE RIBOSOMAL SUBUNIT PROTEIN UL22M"/>
    <property type="match status" value="1"/>
</dbReference>
<dbReference type="Pfam" id="PF00237">
    <property type="entry name" value="Ribosomal_L22"/>
    <property type="match status" value="1"/>
</dbReference>
<dbReference type="SUPFAM" id="SSF54843">
    <property type="entry name" value="Ribosomal protein L22"/>
    <property type="match status" value="1"/>
</dbReference>
<comment type="function">
    <text evidence="1">This protein binds specifically to 23S rRNA; its binding is stimulated by other ribosomal proteins, e.g. L4, L17, and L20. It is important during the early stages of 50S assembly. It makes multiple contacts with different domains of the 23S rRNA in the assembled 50S subunit and ribosome (By similarity).</text>
</comment>
<comment type="function">
    <text evidence="1">The globular domain of the protein is located near the polypeptide exit tunnel on the outside of the subunit, while an extended beta-hairpin is found that lines the wall of the exit tunnel in the center of the 70S ribosome.</text>
</comment>
<comment type="subunit">
    <text evidence="1">Part of the 50S ribosomal subunit.</text>
</comment>
<comment type="mass spectrometry"/>
<comment type="similarity">
    <text evidence="1">Belongs to the universal ribosomal protein uL22 family.</text>
</comment>
<organism>
    <name type="scientific">Rhodopseudomonas palustris (strain ATCC BAA-98 / CGA009)</name>
    <dbReference type="NCBI Taxonomy" id="258594"/>
    <lineage>
        <taxon>Bacteria</taxon>
        <taxon>Pseudomonadati</taxon>
        <taxon>Pseudomonadota</taxon>
        <taxon>Alphaproteobacteria</taxon>
        <taxon>Hyphomicrobiales</taxon>
        <taxon>Nitrobacteraceae</taxon>
        <taxon>Rhodopseudomonas</taxon>
    </lineage>
</organism>